<gene>
    <name type="ordered locus">Os05g0131500</name>
    <name type="ordered locus">LOC_Os05g04120</name>
    <name type="ORF">OsJ_17006</name>
    <name type="ORF">P0033D06.13</name>
</gene>
<proteinExistence type="inferred from homology"/>
<protein>
    <recommendedName>
        <fullName>Solute carrier family 40 member 3, chloroplastic</fullName>
    </recommendedName>
</protein>
<feature type="transit peptide" description="Chloroplast" evidence="2">
    <location>
        <begin position="1"/>
        <end position="51"/>
    </location>
</feature>
<feature type="chain" id="PRO_0000415903" description="Solute carrier family 40 member 3, chloroplastic">
    <location>
        <begin position="52"/>
        <end position="593"/>
    </location>
</feature>
<feature type="transmembrane region" description="Helical" evidence="2">
    <location>
        <begin position="181"/>
        <end position="201"/>
    </location>
</feature>
<feature type="transmembrane region" description="Helical" evidence="2">
    <location>
        <begin position="219"/>
        <end position="239"/>
    </location>
</feature>
<feature type="transmembrane region" description="Helical" evidence="2">
    <location>
        <begin position="253"/>
        <end position="273"/>
    </location>
</feature>
<feature type="transmembrane region" description="Helical" evidence="2">
    <location>
        <begin position="303"/>
        <end position="322"/>
    </location>
</feature>
<feature type="transmembrane region" description="Helical" evidence="2">
    <location>
        <begin position="323"/>
        <end position="343"/>
    </location>
</feature>
<feature type="transmembrane region" description="Helical" evidence="2">
    <location>
        <begin position="403"/>
        <end position="423"/>
    </location>
</feature>
<feature type="transmembrane region" description="Helical" evidence="2">
    <location>
        <begin position="431"/>
        <end position="451"/>
    </location>
</feature>
<feature type="transmembrane region" description="Helical" evidence="2">
    <location>
        <begin position="462"/>
        <end position="482"/>
    </location>
</feature>
<feature type="transmembrane region" description="Helical" evidence="2">
    <location>
        <begin position="493"/>
        <end position="513"/>
    </location>
</feature>
<feature type="transmembrane region" description="Helical" evidence="2">
    <location>
        <begin position="530"/>
        <end position="550"/>
    </location>
</feature>
<feature type="transmembrane region" description="Helical" evidence="2">
    <location>
        <begin position="557"/>
        <end position="577"/>
    </location>
</feature>
<feature type="region of interest" description="Disordered" evidence="3">
    <location>
        <begin position="1"/>
        <end position="23"/>
    </location>
</feature>
<feature type="compositionally biased region" description="Pro residues" evidence="3">
    <location>
        <begin position="8"/>
        <end position="17"/>
    </location>
</feature>
<reference key="1">
    <citation type="journal article" date="2005" name="Mol. Genet. Genomics">
        <title>A fine physical map of the rice chromosome 5.</title>
        <authorList>
            <person name="Cheng C.-H."/>
            <person name="Chung M.C."/>
            <person name="Liu S.-M."/>
            <person name="Chen S.-K."/>
            <person name="Kao F.Y."/>
            <person name="Lin S.-J."/>
            <person name="Hsiao S.-H."/>
            <person name="Tseng I.C."/>
            <person name="Hsing Y.-I.C."/>
            <person name="Wu H.-P."/>
            <person name="Chen C.-S."/>
            <person name="Shaw J.-F."/>
            <person name="Wu J."/>
            <person name="Matsumoto T."/>
            <person name="Sasaki T."/>
            <person name="Chen H.-C."/>
            <person name="Chow T.-Y."/>
        </authorList>
    </citation>
    <scope>NUCLEOTIDE SEQUENCE [LARGE SCALE GENOMIC DNA]</scope>
    <source>
        <strain>cv. Nipponbare</strain>
    </source>
</reference>
<reference key="2">
    <citation type="journal article" date="2005" name="Nature">
        <title>The map-based sequence of the rice genome.</title>
        <authorList>
            <consortium name="International rice genome sequencing project (IRGSP)"/>
        </authorList>
    </citation>
    <scope>NUCLEOTIDE SEQUENCE [LARGE SCALE GENOMIC DNA]</scope>
    <source>
        <strain>cv. Nipponbare</strain>
    </source>
</reference>
<reference key="3">
    <citation type="journal article" date="2013" name="Rice">
        <title>Improvement of the Oryza sativa Nipponbare reference genome using next generation sequence and optical map data.</title>
        <authorList>
            <person name="Kawahara Y."/>
            <person name="de la Bastide M."/>
            <person name="Hamilton J.P."/>
            <person name="Kanamori H."/>
            <person name="McCombie W.R."/>
            <person name="Ouyang S."/>
            <person name="Schwartz D.C."/>
            <person name="Tanaka T."/>
            <person name="Wu J."/>
            <person name="Zhou S."/>
            <person name="Childs K.L."/>
            <person name="Davidson R.M."/>
            <person name="Lin H."/>
            <person name="Quesada-Ocampo L."/>
            <person name="Vaillancourt B."/>
            <person name="Sakai H."/>
            <person name="Lee S.S."/>
            <person name="Kim J."/>
            <person name="Numa H."/>
            <person name="Itoh T."/>
            <person name="Buell C.R."/>
            <person name="Matsumoto T."/>
        </authorList>
    </citation>
    <scope>GENOME REANNOTATION</scope>
    <source>
        <strain>cv. Nipponbare</strain>
    </source>
</reference>
<reference key="4">
    <citation type="journal article" date="2005" name="PLoS Biol.">
        <title>The genomes of Oryza sativa: a history of duplications.</title>
        <authorList>
            <person name="Yu J."/>
            <person name="Wang J."/>
            <person name="Lin W."/>
            <person name="Li S."/>
            <person name="Li H."/>
            <person name="Zhou J."/>
            <person name="Ni P."/>
            <person name="Dong W."/>
            <person name="Hu S."/>
            <person name="Zeng C."/>
            <person name="Zhang J."/>
            <person name="Zhang Y."/>
            <person name="Li R."/>
            <person name="Xu Z."/>
            <person name="Li S."/>
            <person name="Li X."/>
            <person name="Zheng H."/>
            <person name="Cong L."/>
            <person name="Lin L."/>
            <person name="Yin J."/>
            <person name="Geng J."/>
            <person name="Li G."/>
            <person name="Shi J."/>
            <person name="Liu J."/>
            <person name="Lv H."/>
            <person name="Li J."/>
            <person name="Wang J."/>
            <person name="Deng Y."/>
            <person name="Ran L."/>
            <person name="Shi X."/>
            <person name="Wang X."/>
            <person name="Wu Q."/>
            <person name="Li C."/>
            <person name="Ren X."/>
            <person name="Wang J."/>
            <person name="Wang X."/>
            <person name="Li D."/>
            <person name="Liu D."/>
            <person name="Zhang X."/>
            <person name="Ji Z."/>
            <person name="Zhao W."/>
            <person name="Sun Y."/>
            <person name="Zhang Z."/>
            <person name="Bao J."/>
            <person name="Han Y."/>
            <person name="Dong L."/>
            <person name="Ji J."/>
            <person name="Chen P."/>
            <person name="Wu S."/>
            <person name="Liu J."/>
            <person name="Xiao Y."/>
            <person name="Bu D."/>
            <person name="Tan J."/>
            <person name="Yang L."/>
            <person name="Ye C."/>
            <person name="Zhang J."/>
            <person name="Xu J."/>
            <person name="Zhou Y."/>
            <person name="Yu Y."/>
            <person name="Zhang B."/>
            <person name="Zhuang S."/>
            <person name="Wei H."/>
            <person name="Liu B."/>
            <person name="Lei M."/>
            <person name="Yu H."/>
            <person name="Li Y."/>
            <person name="Xu H."/>
            <person name="Wei S."/>
            <person name="He X."/>
            <person name="Fang L."/>
            <person name="Zhang Z."/>
            <person name="Zhang Y."/>
            <person name="Huang X."/>
            <person name="Su Z."/>
            <person name="Tong W."/>
            <person name="Li J."/>
            <person name="Tong Z."/>
            <person name="Li S."/>
            <person name="Ye J."/>
            <person name="Wang L."/>
            <person name="Fang L."/>
            <person name="Lei T."/>
            <person name="Chen C.-S."/>
            <person name="Chen H.-C."/>
            <person name="Xu Z."/>
            <person name="Li H."/>
            <person name="Huang H."/>
            <person name="Zhang F."/>
            <person name="Xu H."/>
            <person name="Li N."/>
            <person name="Zhao C."/>
            <person name="Li S."/>
            <person name="Dong L."/>
            <person name="Huang Y."/>
            <person name="Li L."/>
            <person name="Xi Y."/>
            <person name="Qi Q."/>
            <person name="Li W."/>
            <person name="Zhang B."/>
            <person name="Hu W."/>
            <person name="Zhang Y."/>
            <person name="Tian X."/>
            <person name="Jiao Y."/>
            <person name="Liang X."/>
            <person name="Jin J."/>
            <person name="Gao L."/>
            <person name="Zheng W."/>
            <person name="Hao B."/>
            <person name="Liu S.-M."/>
            <person name="Wang W."/>
            <person name="Yuan L."/>
            <person name="Cao M."/>
            <person name="McDermott J."/>
            <person name="Samudrala R."/>
            <person name="Wang J."/>
            <person name="Wong G.K.-S."/>
            <person name="Yang H."/>
        </authorList>
    </citation>
    <scope>NUCLEOTIDE SEQUENCE [LARGE SCALE GENOMIC DNA]</scope>
    <source>
        <strain>cv. Nipponbare</strain>
    </source>
</reference>
<accession>B9FGV7</accession>
<accession>Q65XT5</accession>
<evidence type="ECO:0000250" key="1"/>
<evidence type="ECO:0000255" key="2"/>
<evidence type="ECO:0000256" key="3">
    <source>
        <dbReference type="SAM" id="MobiDB-lite"/>
    </source>
</evidence>
<evidence type="ECO:0000305" key="4"/>
<organism>
    <name type="scientific">Oryza sativa subsp. japonica</name>
    <name type="common">Rice</name>
    <dbReference type="NCBI Taxonomy" id="39947"/>
    <lineage>
        <taxon>Eukaryota</taxon>
        <taxon>Viridiplantae</taxon>
        <taxon>Streptophyta</taxon>
        <taxon>Embryophyta</taxon>
        <taxon>Tracheophyta</taxon>
        <taxon>Spermatophyta</taxon>
        <taxon>Magnoliopsida</taxon>
        <taxon>Liliopsida</taxon>
        <taxon>Poales</taxon>
        <taxon>Poaceae</taxon>
        <taxon>BOP clade</taxon>
        <taxon>Oryzoideae</taxon>
        <taxon>Oryzeae</taxon>
        <taxon>Oryzinae</taxon>
        <taxon>Oryza</taxon>
        <taxon>Oryza sativa</taxon>
    </lineage>
</organism>
<sequence>MSMSKLLSPPPTSPPGPALSRLPCRRVAPPPVLPFPFPLRRLTSRRVFATSCSSSDSEHAPSASSTALAGAGDDLSAGVTQEREGALPFVQLSSGIVLRTEEQSLLGDHAPAPAPASAASSFALLDELNGGCREDDHLGETPAYPAAMNALYAACLAGNATEQLWNFTWPAAVAVLHPASILPVAVLGFFTKLVVFAAGPLVGELISSLPRIPAYRSLAAIQTAAHLVSVATITYAFAVHRAAAASLLLRPWFAVLVASTAVDRLACVALGIIAERDFVVQLAGAGRPVALAKANATLSRVDLLCETVGASIFALLLSKNNPLTCIKLSCVISLCALPLLIFLCGEMNRLADGIFDHSENTTSHAEKTSSFSIRKTVEEAVATVRNGWSEYMRQPVLPASLAYVFVCFNVALAPGALMTTFLIHQGVRPSVIGAFGGSSGAVGILATFATARLVKELGILKAGAAGLIAQSALLGAAVVVYLTGAVSRRAGALFAFLGLIVASRAGHMAYSAIGLQVVQTGNPASKAKLIGATEIAVASLAELAMMAVAVVASDASHFGALAALSATAVTAAAGMYCRWLANPSDELRRIFPS</sequence>
<name>S40A3_ORYSJ</name>
<keyword id="KW-0150">Chloroplast</keyword>
<keyword id="KW-0406">Ion transport</keyword>
<keyword id="KW-0472">Membrane</keyword>
<keyword id="KW-0934">Plastid</keyword>
<keyword id="KW-1185">Reference proteome</keyword>
<keyword id="KW-0809">Transit peptide</keyword>
<keyword id="KW-0812">Transmembrane</keyword>
<keyword id="KW-1133">Transmembrane helix</keyword>
<keyword id="KW-0813">Transport</keyword>
<comment type="function">
    <text evidence="1">May be involved in iron transport and iron homeostasis.</text>
</comment>
<comment type="subcellular location">
    <subcellularLocation>
        <location evidence="4">Membrane</location>
        <topology evidence="4">Multi-pass membrane protein</topology>
    </subcellularLocation>
    <subcellularLocation>
        <location evidence="4">Plastid</location>
        <location evidence="4">Chloroplast envelope</location>
    </subcellularLocation>
</comment>
<comment type="similarity">
    <text evidence="4">Belongs to the ferroportin (FP) (TC 2.A.100) family. SLC40A subfamily.</text>
</comment>
<comment type="sequence caution" evidence="4">
    <conflict type="erroneous gene model prediction">
        <sequence resource="EMBL-CDS" id="AAU44227"/>
    </conflict>
</comment>
<dbReference type="EMBL" id="AC079357">
    <property type="protein sequence ID" value="AAU44227.1"/>
    <property type="status" value="ALT_SEQ"/>
    <property type="molecule type" value="Genomic_DNA"/>
</dbReference>
<dbReference type="EMBL" id="AP014961">
    <property type="status" value="NOT_ANNOTATED_CDS"/>
    <property type="molecule type" value="Genomic_DNA"/>
</dbReference>
<dbReference type="EMBL" id="CM000142">
    <property type="protein sequence ID" value="EEE62219.1"/>
    <property type="molecule type" value="Genomic_DNA"/>
</dbReference>
<dbReference type="SMR" id="B9FGV7"/>
<dbReference type="STRING" id="39947.B9FGV7"/>
<dbReference type="PaxDb" id="39947-B9FGV7"/>
<dbReference type="GeneID" id="107276535"/>
<dbReference type="KEGG" id="osa:107276535"/>
<dbReference type="eggNOG" id="KOG2601">
    <property type="taxonomic scope" value="Eukaryota"/>
</dbReference>
<dbReference type="InParanoid" id="B9FGV7"/>
<dbReference type="OrthoDB" id="648861at2759"/>
<dbReference type="Proteomes" id="UP000000763">
    <property type="component" value="Chromosome 5"/>
</dbReference>
<dbReference type="Proteomes" id="UP000007752">
    <property type="component" value="Chromosome 5"/>
</dbReference>
<dbReference type="Proteomes" id="UP000059680">
    <property type="component" value="Chromosome 5"/>
</dbReference>
<dbReference type="GO" id="GO:0009941">
    <property type="term" value="C:chloroplast envelope"/>
    <property type="evidence" value="ECO:0007669"/>
    <property type="project" value="UniProtKB-SubCell"/>
</dbReference>
<dbReference type="GO" id="GO:0016020">
    <property type="term" value="C:membrane"/>
    <property type="evidence" value="ECO:0007669"/>
    <property type="project" value="UniProtKB-SubCell"/>
</dbReference>
<dbReference type="GO" id="GO:0005381">
    <property type="term" value="F:iron ion transmembrane transporter activity"/>
    <property type="evidence" value="ECO:0007669"/>
    <property type="project" value="InterPro"/>
</dbReference>
<dbReference type="GO" id="GO:0006826">
    <property type="term" value="P:iron ion transport"/>
    <property type="evidence" value="ECO:0000318"/>
    <property type="project" value="GO_Central"/>
</dbReference>
<dbReference type="InterPro" id="IPR009716">
    <property type="entry name" value="Ferroportin-1"/>
</dbReference>
<dbReference type="InterPro" id="IPR036259">
    <property type="entry name" value="MFS_trans_sf"/>
</dbReference>
<dbReference type="PANTHER" id="PTHR11660">
    <property type="entry name" value="SOLUTE CARRIER FAMILY 40 MEMBER"/>
    <property type="match status" value="1"/>
</dbReference>
<dbReference type="PANTHER" id="PTHR11660:SF51">
    <property type="entry name" value="SOLUTE CARRIER FAMILY 40 MEMBER 3, CHLOROPLASTIC"/>
    <property type="match status" value="1"/>
</dbReference>
<dbReference type="Pfam" id="PF06963">
    <property type="entry name" value="FPN1"/>
    <property type="match status" value="1"/>
</dbReference>
<dbReference type="SUPFAM" id="SSF103473">
    <property type="entry name" value="MFS general substrate transporter"/>
    <property type="match status" value="1"/>
</dbReference>